<gene>
    <name evidence="2" type="primary">mutM</name>
    <name evidence="2" type="synonym">fpg</name>
    <name type="ordered locus">Mlg_2649</name>
</gene>
<dbReference type="EC" id="3.2.2.23" evidence="2"/>
<dbReference type="EC" id="4.2.99.18" evidence="2"/>
<dbReference type="EMBL" id="CP000453">
    <property type="protein sequence ID" value="ABI57989.1"/>
    <property type="molecule type" value="Genomic_DNA"/>
</dbReference>
<dbReference type="RefSeq" id="WP_011630382.1">
    <property type="nucleotide sequence ID" value="NC_008340.1"/>
</dbReference>
<dbReference type="SMR" id="Q0A598"/>
<dbReference type="KEGG" id="aeh:Mlg_2649"/>
<dbReference type="eggNOG" id="COG0266">
    <property type="taxonomic scope" value="Bacteria"/>
</dbReference>
<dbReference type="HOGENOM" id="CLU_038423_1_1_6"/>
<dbReference type="OrthoDB" id="9800855at2"/>
<dbReference type="Proteomes" id="UP000001962">
    <property type="component" value="Chromosome"/>
</dbReference>
<dbReference type="GO" id="GO:0034039">
    <property type="term" value="F:8-oxo-7,8-dihydroguanine DNA N-glycosylase activity"/>
    <property type="evidence" value="ECO:0007669"/>
    <property type="project" value="TreeGrafter"/>
</dbReference>
<dbReference type="GO" id="GO:0140078">
    <property type="term" value="F:class I DNA-(apurinic or apyrimidinic site) endonuclease activity"/>
    <property type="evidence" value="ECO:0007669"/>
    <property type="project" value="UniProtKB-EC"/>
</dbReference>
<dbReference type="GO" id="GO:0003684">
    <property type="term" value="F:damaged DNA binding"/>
    <property type="evidence" value="ECO:0007669"/>
    <property type="project" value="InterPro"/>
</dbReference>
<dbReference type="GO" id="GO:0008270">
    <property type="term" value="F:zinc ion binding"/>
    <property type="evidence" value="ECO:0007669"/>
    <property type="project" value="UniProtKB-UniRule"/>
</dbReference>
<dbReference type="GO" id="GO:0006284">
    <property type="term" value="P:base-excision repair"/>
    <property type="evidence" value="ECO:0007669"/>
    <property type="project" value="InterPro"/>
</dbReference>
<dbReference type="CDD" id="cd08966">
    <property type="entry name" value="EcFpg-like_N"/>
    <property type="match status" value="1"/>
</dbReference>
<dbReference type="FunFam" id="1.10.8.50:FF:000003">
    <property type="entry name" value="Formamidopyrimidine-DNA glycosylase"/>
    <property type="match status" value="1"/>
</dbReference>
<dbReference type="FunFam" id="3.20.190.10:FF:000001">
    <property type="entry name" value="Formamidopyrimidine-DNA glycosylase"/>
    <property type="match status" value="1"/>
</dbReference>
<dbReference type="Gene3D" id="1.10.8.50">
    <property type="match status" value="1"/>
</dbReference>
<dbReference type="Gene3D" id="3.20.190.10">
    <property type="entry name" value="MutM-like, N-terminal"/>
    <property type="match status" value="1"/>
</dbReference>
<dbReference type="HAMAP" id="MF_00103">
    <property type="entry name" value="Fapy_DNA_glycosyl"/>
    <property type="match status" value="1"/>
</dbReference>
<dbReference type="InterPro" id="IPR015886">
    <property type="entry name" value="DNA_glyclase/AP_lyase_DNA-bd"/>
</dbReference>
<dbReference type="InterPro" id="IPR015887">
    <property type="entry name" value="DNA_glyclase_Znf_dom_DNA_BS"/>
</dbReference>
<dbReference type="InterPro" id="IPR020629">
    <property type="entry name" value="Formamido-pyr_DNA_Glyclase"/>
</dbReference>
<dbReference type="InterPro" id="IPR012319">
    <property type="entry name" value="FPG_cat"/>
</dbReference>
<dbReference type="InterPro" id="IPR035937">
    <property type="entry name" value="MutM-like_N-ter"/>
</dbReference>
<dbReference type="InterPro" id="IPR010979">
    <property type="entry name" value="Ribosomal_uS13-like_H2TH"/>
</dbReference>
<dbReference type="InterPro" id="IPR000214">
    <property type="entry name" value="Znf_DNA_glyclase/AP_lyase"/>
</dbReference>
<dbReference type="InterPro" id="IPR010663">
    <property type="entry name" value="Znf_FPG/IleRS"/>
</dbReference>
<dbReference type="NCBIfam" id="TIGR00577">
    <property type="entry name" value="fpg"/>
    <property type="match status" value="1"/>
</dbReference>
<dbReference type="NCBIfam" id="NF002211">
    <property type="entry name" value="PRK01103.1"/>
    <property type="match status" value="1"/>
</dbReference>
<dbReference type="PANTHER" id="PTHR22993">
    <property type="entry name" value="FORMAMIDOPYRIMIDINE-DNA GLYCOSYLASE"/>
    <property type="match status" value="1"/>
</dbReference>
<dbReference type="PANTHER" id="PTHR22993:SF9">
    <property type="entry name" value="FORMAMIDOPYRIMIDINE-DNA GLYCOSYLASE"/>
    <property type="match status" value="1"/>
</dbReference>
<dbReference type="Pfam" id="PF01149">
    <property type="entry name" value="Fapy_DNA_glyco"/>
    <property type="match status" value="1"/>
</dbReference>
<dbReference type="Pfam" id="PF06831">
    <property type="entry name" value="H2TH"/>
    <property type="match status" value="1"/>
</dbReference>
<dbReference type="Pfam" id="PF06827">
    <property type="entry name" value="zf-FPG_IleRS"/>
    <property type="match status" value="1"/>
</dbReference>
<dbReference type="SMART" id="SM00898">
    <property type="entry name" value="Fapy_DNA_glyco"/>
    <property type="match status" value="1"/>
</dbReference>
<dbReference type="SMART" id="SM01232">
    <property type="entry name" value="H2TH"/>
    <property type="match status" value="1"/>
</dbReference>
<dbReference type="SUPFAM" id="SSF57716">
    <property type="entry name" value="Glucocorticoid receptor-like (DNA-binding domain)"/>
    <property type="match status" value="1"/>
</dbReference>
<dbReference type="SUPFAM" id="SSF81624">
    <property type="entry name" value="N-terminal domain of MutM-like DNA repair proteins"/>
    <property type="match status" value="1"/>
</dbReference>
<dbReference type="SUPFAM" id="SSF46946">
    <property type="entry name" value="S13-like H2TH domain"/>
    <property type="match status" value="1"/>
</dbReference>
<dbReference type="PROSITE" id="PS51068">
    <property type="entry name" value="FPG_CAT"/>
    <property type="match status" value="1"/>
</dbReference>
<dbReference type="PROSITE" id="PS01242">
    <property type="entry name" value="ZF_FPG_1"/>
    <property type="match status" value="1"/>
</dbReference>
<dbReference type="PROSITE" id="PS51066">
    <property type="entry name" value="ZF_FPG_2"/>
    <property type="match status" value="1"/>
</dbReference>
<comment type="function">
    <text evidence="2">Involved in base excision repair of DNA damaged by oxidation or by mutagenic agents. Acts as a DNA glycosylase that recognizes and removes damaged bases. Has a preference for oxidized purines, such as 7,8-dihydro-8-oxoguanine (8-oxoG). Has AP (apurinic/apyrimidinic) lyase activity and introduces nicks in the DNA strand. Cleaves the DNA backbone by beta-delta elimination to generate a single-strand break at the site of the removed base with both 3'- and 5'-phosphates.</text>
</comment>
<comment type="catalytic activity">
    <reaction evidence="2">
        <text>Hydrolysis of DNA containing ring-opened 7-methylguanine residues, releasing 2,6-diamino-4-hydroxy-5-(N-methyl)formamidopyrimidine.</text>
        <dbReference type="EC" id="3.2.2.23"/>
    </reaction>
</comment>
<comment type="catalytic activity">
    <reaction evidence="2">
        <text>2'-deoxyribonucleotide-(2'-deoxyribose 5'-phosphate)-2'-deoxyribonucleotide-DNA = a 3'-end 2'-deoxyribonucleotide-(2,3-dehydro-2,3-deoxyribose 5'-phosphate)-DNA + a 5'-end 5'-phospho-2'-deoxyribonucleoside-DNA + H(+)</text>
        <dbReference type="Rhea" id="RHEA:66592"/>
        <dbReference type="Rhea" id="RHEA-COMP:13180"/>
        <dbReference type="Rhea" id="RHEA-COMP:16897"/>
        <dbReference type="Rhea" id="RHEA-COMP:17067"/>
        <dbReference type="ChEBI" id="CHEBI:15378"/>
        <dbReference type="ChEBI" id="CHEBI:136412"/>
        <dbReference type="ChEBI" id="CHEBI:157695"/>
        <dbReference type="ChEBI" id="CHEBI:167181"/>
        <dbReference type="EC" id="4.2.99.18"/>
    </reaction>
</comment>
<comment type="cofactor">
    <cofactor evidence="2">
        <name>Zn(2+)</name>
        <dbReference type="ChEBI" id="CHEBI:29105"/>
    </cofactor>
    <text evidence="2">Binds 1 zinc ion per subunit.</text>
</comment>
<comment type="subunit">
    <text evidence="2">Monomer.</text>
</comment>
<comment type="similarity">
    <text evidence="2">Belongs to the FPG family.</text>
</comment>
<sequence>MPELPEVETTRRGLAPLLEGRRVTGMTVRQARLRWPVPAGLPDAITGQTIRAVDRRAKYLLFRTPAGTLILHLGMSGSLRVIPGQQAGACAVPPGRHDHVDLRLADGSCLRYTDPRRFGSLHWCTGEPEAHWLLHRLGPEPFDTAFDGDRLHRLSRGRRTSVKAFIMDSGIVVGVGNIYASESLFRAGIHPGRPAGRVGLARYRRLAGAVREVLAEAIAAGGTTLRDFTASDGRPGYFAQTLNVYGRAGAPCPRCGRSIRQRRIAQRSTWYCPGCQR</sequence>
<keyword id="KW-0227">DNA damage</keyword>
<keyword id="KW-0234">DNA repair</keyword>
<keyword id="KW-0238">DNA-binding</keyword>
<keyword id="KW-0326">Glycosidase</keyword>
<keyword id="KW-0378">Hydrolase</keyword>
<keyword id="KW-0456">Lyase</keyword>
<keyword id="KW-0479">Metal-binding</keyword>
<keyword id="KW-0511">Multifunctional enzyme</keyword>
<keyword id="KW-1185">Reference proteome</keyword>
<keyword id="KW-0862">Zinc</keyword>
<keyword id="KW-0863">Zinc-finger</keyword>
<accession>Q0A598</accession>
<protein>
    <recommendedName>
        <fullName evidence="2">Formamidopyrimidine-DNA glycosylase</fullName>
        <shortName evidence="2">Fapy-DNA glycosylase</shortName>
        <ecNumber evidence="2">3.2.2.23</ecNumber>
    </recommendedName>
    <alternativeName>
        <fullName evidence="2">DNA-(apurinic or apyrimidinic site) lyase MutM</fullName>
        <shortName evidence="2">AP lyase MutM</shortName>
        <ecNumber evidence="2">4.2.99.18</ecNumber>
    </alternativeName>
</protein>
<reference key="1">
    <citation type="submission" date="2006-08" db="EMBL/GenBank/DDBJ databases">
        <title>Complete sequence of Alkalilimnicola ehrilichei MLHE-1.</title>
        <authorList>
            <person name="Copeland A."/>
            <person name="Lucas S."/>
            <person name="Lapidus A."/>
            <person name="Barry K."/>
            <person name="Detter J.C."/>
            <person name="Glavina del Rio T."/>
            <person name="Hammon N."/>
            <person name="Israni S."/>
            <person name="Dalin E."/>
            <person name="Tice H."/>
            <person name="Pitluck S."/>
            <person name="Sims D."/>
            <person name="Brettin T."/>
            <person name="Bruce D."/>
            <person name="Han C."/>
            <person name="Tapia R."/>
            <person name="Gilna P."/>
            <person name="Schmutz J."/>
            <person name="Larimer F."/>
            <person name="Land M."/>
            <person name="Hauser L."/>
            <person name="Kyrpides N."/>
            <person name="Mikhailova N."/>
            <person name="Oremland R.S."/>
            <person name="Hoeft S.E."/>
            <person name="Switzer-Blum J."/>
            <person name="Kulp T."/>
            <person name="King G."/>
            <person name="Tabita R."/>
            <person name="Witte B."/>
            <person name="Santini J.M."/>
            <person name="Basu P."/>
            <person name="Hollibaugh J.T."/>
            <person name="Xie G."/>
            <person name="Stolz J.F."/>
            <person name="Richardson P."/>
        </authorList>
    </citation>
    <scope>NUCLEOTIDE SEQUENCE [LARGE SCALE GENOMIC DNA]</scope>
    <source>
        <strain>ATCC BAA-1101 / DSM 17681 / MLHE-1</strain>
    </source>
</reference>
<proteinExistence type="inferred from homology"/>
<organism>
    <name type="scientific">Alkalilimnicola ehrlichii (strain ATCC BAA-1101 / DSM 17681 / MLHE-1)</name>
    <dbReference type="NCBI Taxonomy" id="187272"/>
    <lineage>
        <taxon>Bacteria</taxon>
        <taxon>Pseudomonadati</taxon>
        <taxon>Pseudomonadota</taxon>
        <taxon>Gammaproteobacteria</taxon>
        <taxon>Chromatiales</taxon>
        <taxon>Ectothiorhodospiraceae</taxon>
        <taxon>Alkalilimnicola</taxon>
    </lineage>
</organism>
<feature type="initiator methionine" description="Removed" evidence="1">
    <location>
        <position position="1"/>
    </location>
</feature>
<feature type="chain" id="PRO_1000008673" description="Formamidopyrimidine-DNA glycosylase">
    <location>
        <begin position="2"/>
        <end position="277"/>
    </location>
</feature>
<feature type="zinc finger region" description="FPG-type" evidence="2">
    <location>
        <begin position="243"/>
        <end position="277"/>
    </location>
</feature>
<feature type="active site" description="Schiff-base intermediate with DNA" evidence="2">
    <location>
        <position position="2"/>
    </location>
</feature>
<feature type="active site" description="Proton donor" evidence="2">
    <location>
        <position position="3"/>
    </location>
</feature>
<feature type="active site" description="Proton donor; for beta-elimination activity" evidence="2">
    <location>
        <position position="58"/>
    </location>
</feature>
<feature type="active site" description="Proton donor; for delta-elimination activity" evidence="2">
    <location>
        <position position="267"/>
    </location>
</feature>
<feature type="binding site" evidence="2">
    <location>
        <position position="97"/>
    </location>
    <ligand>
        <name>DNA</name>
        <dbReference type="ChEBI" id="CHEBI:16991"/>
    </ligand>
</feature>
<feature type="binding site" evidence="2">
    <location>
        <position position="116"/>
    </location>
    <ligand>
        <name>DNA</name>
        <dbReference type="ChEBI" id="CHEBI:16991"/>
    </ligand>
</feature>
<feature type="binding site" evidence="2">
    <location>
        <position position="158"/>
    </location>
    <ligand>
        <name>DNA</name>
        <dbReference type="ChEBI" id="CHEBI:16991"/>
    </ligand>
</feature>
<name>FPG_ALKEH</name>
<evidence type="ECO:0000250" key="1"/>
<evidence type="ECO:0000255" key="2">
    <source>
        <dbReference type="HAMAP-Rule" id="MF_00103"/>
    </source>
</evidence>